<evidence type="ECO:0000255" key="1">
    <source>
        <dbReference type="HAMAP-Rule" id="MF_00664"/>
    </source>
</evidence>
<evidence type="ECO:0000305" key="2"/>
<name>PSD_MYCLE</name>
<reference key="1">
    <citation type="journal article" date="2001" name="Nature">
        <title>Massive gene decay in the leprosy bacillus.</title>
        <authorList>
            <person name="Cole S.T."/>
            <person name="Eiglmeier K."/>
            <person name="Parkhill J."/>
            <person name="James K.D."/>
            <person name="Thomson N.R."/>
            <person name="Wheeler P.R."/>
            <person name="Honore N."/>
            <person name="Garnier T."/>
            <person name="Churcher C.M."/>
            <person name="Harris D.E."/>
            <person name="Mungall K.L."/>
            <person name="Basham D."/>
            <person name="Brown D."/>
            <person name="Chillingworth T."/>
            <person name="Connor R."/>
            <person name="Davies R.M."/>
            <person name="Devlin K."/>
            <person name="Duthoy S."/>
            <person name="Feltwell T."/>
            <person name="Fraser A."/>
            <person name="Hamlin N."/>
            <person name="Holroyd S."/>
            <person name="Hornsby T."/>
            <person name="Jagels K."/>
            <person name="Lacroix C."/>
            <person name="Maclean J."/>
            <person name="Moule S."/>
            <person name="Murphy L.D."/>
            <person name="Oliver K."/>
            <person name="Quail M.A."/>
            <person name="Rajandream M.A."/>
            <person name="Rutherford K.M."/>
            <person name="Rutter S."/>
            <person name="Seeger K."/>
            <person name="Simon S."/>
            <person name="Simmonds M."/>
            <person name="Skelton J."/>
            <person name="Squares R."/>
            <person name="Squares S."/>
            <person name="Stevens K."/>
            <person name="Taylor K."/>
            <person name="Whitehead S."/>
            <person name="Woodward J.R."/>
            <person name="Barrell B.G."/>
        </authorList>
    </citation>
    <scope>NUCLEOTIDE SEQUENCE [LARGE SCALE GENOMIC DNA]</scope>
    <source>
        <strain>TN</strain>
    </source>
</reference>
<proteinExistence type="inferred from homology"/>
<organism>
    <name type="scientific">Mycobacterium leprae (strain TN)</name>
    <dbReference type="NCBI Taxonomy" id="272631"/>
    <lineage>
        <taxon>Bacteria</taxon>
        <taxon>Bacillati</taxon>
        <taxon>Actinomycetota</taxon>
        <taxon>Actinomycetes</taxon>
        <taxon>Mycobacteriales</taxon>
        <taxon>Mycobacteriaceae</taxon>
        <taxon>Mycobacterium</taxon>
    </lineage>
</organism>
<feature type="chain" id="PRO_0000029775" description="Phosphatidylserine decarboxylase beta chain" evidence="1">
    <location>
        <begin position="1"/>
        <end position="211"/>
    </location>
</feature>
<feature type="chain" id="PRO_0000029776" description="Phosphatidylserine decarboxylase alpha chain" evidence="1">
    <location>
        <begin position="212"/>
        <end position="243"/>
    </location>
</feature>
<feature type="active site" description="Schiff-base intermediate with substrate; via pyruvic acid" evidence="1">
    <location>
        <position position="212"/>
    </location>
</feature>
<feature type="site" description="Cleavage (non-hydrolytic); by autocatalysis" evidence="1">
    <location>
        <begin position="211"/>
        <end position="212"/>
    </location>
</feature>
<feature type="modified residue" description="Pyruvic acid (Ser); by autocatalysis" evidence="1">
    <location>
        <position position="212"/>
    </location>
</feature>
<keyword id="KW-1003">Cell membrane</keyword>
<keyword id="KW-0210">Decarboxylase</keyword>
<keyword id="KW-0444">Lipid biosynthesis</keyword>
<keyword id="KW-0443">Lipid metabolism</keyword>
<keyword id="KW-0456">Lyase</keyword>
<keyword id="KW-0472">Membrane</keyword>
<keyword id="KW-0594">Phospholipid biosynthesis</keyword>
<keyword id="KW-1208">Phospholipid metabolism</keyword>
<keyword id="KW-0670">Pyruvate</keyword>
<keyword id="KW-1185">Reference proteome</keyword>
<keyword id="KW-0865">Zymogen</keyword>
<sequence length="243" mass="25523">MARRPRAESSKEGPAHLLELVRSAVPPVHSAGHPFISAGLAVTSAGAVGQVVTGRDLRWLRRVGLLAASACAVFFRHPSRVPPTRAGVVVAPADGMICVIDSATPPAELSMGNMSLPRVSIFLSLLDVHVQRAPISGEVIAVQYQPGRFGAADLAPASTENERTSVRIRTAGGTEVVVVQIAGLLARRIVCYAHIGDKLTIGDTYGLIRFGSRLDTYLPPGTEPVVQVGQRAVAGETVLADLT</sequence>
<accession>Q9CCW9</accession>
<accession>Q9ZBM3</accession>
<gene>
    <name evidence="1" type="primary">psd</name>
    <name type="ordered locus">ML0311</name>
    <name type="ORF">MLCB1450.11</name>
</gene>
<protein>
    <recommendedName>
        <fullName evidence="1">Phosphatidylserine decarboxylase proenzyme</fullName>
        <ecNumber evidence="1">4.1.1.65</ecNumber>
    </recommendedName>
    <component>
        <recommendedName>
            <fullName evidence="1">Phosphatidylserine decarboxylase alpha chain</fullName>
        </recommendedName>
    </component>
    <component>
        <recommendedName>
            <fullName evidence="1">Phosphatidylserine decarboxylase beta chain</fullName>
        </recommendedName>
    </component>
</protein>
<dbReference type="EC" id="4.1.1.65" evidence="1"/>
<dbReference type="EMBL" id="AL583918">
    <property type="protein sequence ID" value="CAC29819.1"/>
    <property type="molecule type" value="Genomic_DNA"/>
</dbReference>
<dbReference type="EMBL" id="AL035159">
    <property type="protein sequence ID" value="CAA22695.1"/>
    <property type="status" value="ALT_INIT"/>
    <property type="molecule type" value="Genomic_DNA"/>
</dbReference>
<dbReference type="PIR" id="G86947">
    <property type="entry name" value="G86947"/>
</dbReference>
<dbReference type="PIR" id="T44729">
    <property type="entry name" value="T44729"/>
</dbReference>
<dbReference type="RefSeq" id="NP_301341.1">
    <property type="nucleotide sequence ID" value="NC_002677.1"/>
</dbReference>
<dbReference type="RefSeq" id="WP_010907665.1">
    <property type="nucleotide sequence ID" value="NC_002677.1"/>
</dbReference>
<dbReference type="STRING" id="272631.gene:17574130"/>
<dbReference type="KEGG" id="mle:ML0311"/>
<dbReference type="PATRIC" id="fig|272631.5.peg.497"/>
<dbReference type="Leproma" id="ML0311"/>
<dbReference type="eggNOG" id="COG0688">
    <property type="taxonomic scope" value="Bacteria"/>
</dbReference>
<dbReference type="HOGENOM" id="CLU_072492_0_0_11"/>
<dbReference type="OrthoDB" id="9790893at2"/>
<dbReference type="UniPathway" id="UPA00558">
    <property type="reaction ID" value="UER00616"/>
</dbReference>
<dbReference type="Proteomes" id="UP000000806">
    <property type="component" value="Chromosome"/>
</dbReference>
<dbReference type="GO" id="GO:0005886">
    <property type="term" value="C:plasma membrane"/>
    <property type="evidence" value="ECO:0007669"/>
    <property type="project" value="UniProtKB-SubCell"/>
</dbReference>
<dbReference type="GO" id="GO:0004609">
    <property type="term" value="F:phosphatidylserine decarboxylase activity"/>
    <property type="evidence" value="ECO:0007669"/>
    <property type="project" value="UniProtKB-UniRule"/>
</dbReference>
<dbReference type="GO" id="GO:0006646">
    <property type="term" value="P:phosphatidylethanolamine biosynthetic process"/>
    <property type="evidence" value="ECO:0007669"/>
    <property type="project" value="UniProtKB-UniRule"/>
</dbReference>
<dbReference type="HAMAP" id="MF_00664">
    <property type="entry name" value="PS_decarb_PSD_A"/>
    <property type="match status" value="1"/>
</dbReference>
<dbReference type="InterPro" id="IPR003817">
    <property type="entry name" value="PS_Dcarbxylase"/>
</dbReference>
<dbReference type="InterPro" id="IPR033175">
    <property type="entry name" value="PSD-A"/>
</dbReference>
<dbReference type="NCBIfam" id="NF003679">
    <property type="entry name" value="PRK05305.1-3"/>
    <property type="match status" value="1"/>
</dbReference>
<dbReference type="PANTHER" id="PTHR35809">
    <property type="entry name" value="ARCHAETIDYLSERINE DECARBOXYLASE PROENZYME-RELATED"/>
    <property type="match status" value="1"/>
</dbReference>
<dbReference type="PANTHER" id="PTHR35809:SF1">
    <property type="entry name" value="ARCHAETIDYLSERINE DECARBOXYLASE PROENZYME-RELATED"/>
    <property type="match status" value="1"/>
</dbReference>
<dbReference type="Pfam" id="PF02666">
    <property type="entry name" value="PS_Dcarbxylase"/>
    <property type="match status" value="1"/>
</dbReference>
<comment type="function">
    <text evidence="1">Catalyzes the formation of phosphatidylethanolamine (PtdEtn) from phosphatidylserine (PtdSer).</text>
</comment>
<comment type="catalytic activity">
    <reaction evidence="1">
        <text>a 1,2-diacyl-sn-glycero-3-phospho-L-serine + H(+) = a 1,2-diacyl-sn-glycero-3-phosphoethanolamine + CO2</text>
        <dbReference type="Rhea" id="RHEA:20828"/>
        <dbReference type="ChEBI" id="CHEBI:15378"/>
        <dbReference type="ChEBI" id="CHEBI:16526"/>
        <dbReference type="ChEBI" id="CHEBI:57262"/>
        <dbReference type="ChEBI" id="CHEBI:64612"/>
        <dbReference type="EC" id="4.1.1.65"/>
    </reaction>
</comment>
<comment type="cofactor">
    <cofactor evidence="1">
        <name>pyruvate</name>
        <dbReference type="ChEBI" id="CHEBI:15361"/>
    </cofactor>
    <text evidence="1">Binds 1 pyruvoyl group covalently per subunit.</text>
</comment>
<comment type="pathway">
    <text evidence="1">Phospholipid metabolism; phosphatidylethanolamine biosynthesis; phosphatidylethanolamine from CDP-diacylglycerol: step 2/2.</text>
</comment>
<comment type="subunit">
    <text evidence="1">Heterodimer of a large membrane-associated beta subunit and a small pyruvoyl-containing alpha subunit.</text>
</comment>
<comment type="subcellular location">
    <subcellularLocation>
        <location evidence="1">Cell membrane</location>
        <topology evidence="1">Peripheral membrane protein</topology>
    </subcellularLocation>
</comment>
<comment type="PTM">
    <text evidence="1">Is synthesized initially as an inactive proenzyme. Formation of the active enzyme involves a self-maturation process in which the active site pyruvoyl group is generated from an internal serine residue via an autocatalytic post-translational modification. Two non-identical subunits are generated from the proenzyme in this reaction, and the pyruvate is formed at the N-terminus of the alpha chain, which is derived from the carboxyl end of the proenzyme. The post-translation cleavage follows an unusual pathway, termed non-hydrolytic serinolysis, in which the side chain hydroxyl group of the serine supplies its oxygen atom to form the C-terminus of the beta chain, while the remainder of the serine residue undergoes an oxidative deamination to produce ammonia and the pyruvoyl prosthetic group on the alpha chain.</text>
</comment>
<comment type="similarity">
    <text evidence="1">Belongs to the phosphatidylserine decarboxylase family. PSD-A subfamily.</text>
</comment>
<comment type="sequence caution" evidence="2">
    <conflict type="erroneous initiation">
        <sequence resource="EMBL-CDS" id="CAA22695"/>
    </conflict>
</comment>